<sequence length="9" mass="1005">AGDVIYIVR</sequence>
<keyword id="KW-0903">Direct protein sequencing</keyword>
<keyword id="KW-0325">Glycoprotein</keyword>
<keyword id="KW-0378">Hydrolase</keyword>
<keyword id="KW-1185">Reference proteome</keyword>
<keyword id="KW-0964">Secreted</keyword>
<proteinExistence type="evidence at protein level"/>
<dbReference type="EC" id="3.1.3.2"/>
<dbReference type="InParanoid" id="P83380"/>
<dbReference type="BioCyc" id="MetaCyc:MONOMER-15160"/>
<dbReference type="BRENDA" id="3.1.3.2">
    <property type="organism ID" value="3101"/>
</dbReference>
<dbReference type="SABIO-RK" id="P83380"/>
<dbReference type="Proteomes" id="UP000004994">
    <property type="component" value="Unplaced"/>
</dbReference>
<dbReference type="GO" id="GO:0005576">
    <property type="term" value="C:extracellular region"/>
    <property type="evidence" value="ECO:0007669"/>
    <property type="project" value="UniProtKB-SubCell"/>
</dbReference>
<dbReference type="GO" id="GO:0003993">
    <property type="term" value="F:acid phosphatase activity"/>
    <property type="evidence" value="ECO:0007669"/>
    <property type="project" value="UniProtKB-EC"/>
</dbReference>
<name>PPH1_SOLLC</name>
<reference key="1">
    <citation type="journal article" date="2002" name="Eur. J. Biochem.">
        <title>Purification and characterization of two secreted purple acid phosphatase isozymes from phosphate-starved tomato (Lycopersicon esculentum) cell cultures.</title>
        <authorList>
            <person name="Bozzo G.G."/>
            <person name="Raghothama K.G."/>
            <person name="Plaxton W.C."/>
        </authorList>
    </citation>
    <scope>PROTEIN SEQUENCE</scope>
    <scope>CATALYTIC ACTIVITY</scope>
    <scope>SUBUNIT</scope>
    <scope>SUBCELLULAR LOCATION</scope>
    <scope>GLYCOSYLATION</scope>
    <source>
        <strain>cv. Moneymaker</strain>
        <tissue>Seed</tissue>
    </source>
</reference>
<evidence type="ECO:0000269" key="1">
    <source>
    </source>
</evidence>
<evidence type="ECO:0000305" key="2"/>
<feature type="chain" id="PRO_0000114475" description="Purple acid phosphatase isozyme LeSAP1">
    <location>
        <begin position="1" status="less than"/>
        <end position="9" status="greater than"/>
    </location>
</feature>
<feature type="non-terminal residue" evidence="2">
    <location>
        <position position="1"/>
    </location>
</feature>
<feature type="non-terminal residue" evidence="2">
    <location>
        <position position="9"/>
    </location>
</feature>
<comment type="catalytic activity">
    <reaction evidence="1">
        <text>a phosphate monoester + H2O = an alcohol + phosphate</text>
        <dbReference type="Rhea" id="RHEA:15017"/>
        <dbReference type="ChEBI" id="CHEBI:15377"/>
        <dbReference type="ChEBI" id="CHEBI:30879"/>
        <dbReference type="ChEBI" id="CHEBI:43474"/>
        <dbReference type="ChEBI" id="CHEBI:67140"/>
        <dbReference type="EC" id="3.1.3.2"/>
    </reaction>
</comment>
<comment type="subunit">
    <text evidence="1 2">Monomer.</text>
</comment>
<comment type="subcellular location">
    <subcellularLocation>
        <location evidence="1">Secreted</location>
    </subcellularLocation>
</comment>
<comment type="PTM">
    <text evidence="1 2">Glycosylated.</text>
</comment>
<comment type="miscellaneous">
    <text evidence="2">In L.esculentum there are at least two isozymes of purple acid phosphatase.</text>
</comment>
<comment type="similarity">
    <text evidence="2">Belongs to the metallophosphoesterase superfamily. Purple acid phosphatase family.</text>
</comment>
<accession>P83380</accession>
<organism evidence="2">
    <name type="scientific">Solanum lycopersicum</name>
    <name type="common">Tomato</name>
    <name type="synonym">Lycopersicon esculentum</name>
    <dbReference type="NCBI Taxonomy" id="4081"/>
    <lineage>
        <taxon>Eukaryota</taxon>
        <taxon>Viridiplantae</taxon>
        <taxon>Streptophyta</taxon>
        <taxon>Embryophyta</taxon>
        <taxon>Tracheophyta</taxon>
        <taxon>Spermatophyta</taxon>
        <taxon>Magnoliopsida</taxon>
        <taxon>eudicotyledons</taxon>
        <taxon>Gunneridae</taxon>
        <taxon>Pentapetalae</taxon>
        <taxon>asterids</taxon>
        <taxon>lamiids</taxon>
        <taxon>Solanales</taxon>
        <taxon>Solanaceae</taxon>
        <taxon>Solanoideae</taxon>
        <taxon>Solaneae</taxon>
        <taxon>Solanum</taxon>
        <taxon>Solanum subgen. Lycopersicon</taxon>
    </lineage>
</organism>
<protein>
    <recommendedName>
        <fullName>Purple acid phosphatase isozyme LeSAP1</fullName>
        <ecNumber>3.1.3.2</ecNumber>
    </recommendedName>
</protein>